<name>PCKA_SHIB3</name>
<organism>
    <name type="scientific">Shigella boydii serotype 18 (strain CDC 3083-94 / BS512)</name>
    <dbReference type="NCBI Taxonomy" id="344609"/>
    <lineage>
        <taxon>Bacteria</taxon>
        <taxon>Pseudomonadati</taxon>
        <taxon>Pseudomonadota</taxon>
        <taxon>Gammaproteobacteria</taxon>
        <taxon>Enterobacterales</taxon>
        <taxon>Enterobacteriaceae</taxon>
        <taxon>Shigella</taxon>
    </lineage>
</organism>
<keyword id="KW-0007">Acetylation</keyword>
<keyword id="KW-0067">ATP-binding</keyword>
<keyword id="KW-0963">Cytoplasm</keyword>
<keyword id="KW-0210">Decarboxylase</keyword>
<keyword id="KW-0312">Gluconeogenesis</keyword>
<keyword id="KW-0456">Lyase</keyword>
<keyword id="KW-0464">Manganese</keyword>
<keyword id="KW-0479">Metal-binding</keyword>
<keyword id="KW-0547">Nucleotide-binding</keyword>
<keyword id="KW-1185">Reference proteome</keyword>
<feature type="chain" id="PRO_1000192335" description="Phosphoenolpyruvate carboxykinase (ATP)">
    <location>
        <begin position="1"/>
        <end position="540"/>
    </location>
</feature>
<feature type="binding site" evidence="1">
    <location>
        <position position="65"/>
    </location>
    <ligand>
        <name>substrate</name>
    </ligand>
</feature>
<feature type="binding site" evidence="1">
    <location>
        <position position="207"/>
    </location>
    <ligand>
        <name>substrate</name>
    </ligand>
</feature>
<feature type="binding site" evidence="1">
    <location>
        <position position="213"/>
    </location>
    <ligand>
        <name>ATP</name>
        <dbReference type="ChEBI" id="CHEBI:30616"/>
    </ligand>
</feature>
<feature type="binding site" evidence="1">
    <location>
        <position position="213"/>
    </location>
    <ligand>
        <name>Mn(2+)</name>
        <dbReference type="ChEBI" id="CHEBI:29035"/>
    </ligand>
</feature>
<feature type="binding site" evidence="1">
    <location>
        <position position="213"/>
    </location>
    <ligand>
        <name>substrate</name>
    </ligand>
</feature>
<feature type="binding site" evidence="1">
    <location>
        <position position="232"/>
    </location>
    <ligand>
        <name>ATP</name>
        <dbReference type="ChEBI" id="CHEBI:30616"/>
    </ligand>
</feature>
<feature type="binding site" evidence="1">
    <location>
        <position position="232"/>
    </location>
    <ligand>
        <name>Mn(2+)</name>
        <dbReference type="ChEBI" id="CHEBI:29035"/>
    </ligand>
</feature>
<feature type="binding site" evidence="1">
    <location>
        <begin position="248"/>
        <end position="256"/>
    </location>
    <ligand>
        <name>ATP</name>
        <dbReference type="ChEBI" id="CHEBI:30616"/>
    </ligand>
</feature>
<feature type="binding site" evidence="1">
    <location>
        <position position="269"/>
    </location>
    <ligand>
        <name>Mn(2+)</name>
        <dbReference type="ChEBI" id="CHEBI:29035"/>
    </ligand>
</feature>
<feature type="binding site" evidence="1">
    <location>
        <position position="297"/>
    </location>
    <ligand>
        <name>ATP</name>
        <dbReference type="ChEBI" id="CHEBI:30616"/>
    </ligand>
</feature>
<feature type="binding site" evidence="1">
    <location>
        <position position="333"/>
    </location>
    <ligand>
        <name>ATP</name>
        <dbReference type="ChEBI" id="CHEBI:30616"/>
    </ligand>
</feature>
<feature type="binding site" evidence="1">
    <location>
        <position position="333"/>
    </location>
    <ligand>
        <name>substrate</name>
    </ligand>
</feature>
<feature type="binding site" evidence="1">
    <location>
        <begin position="449"/>
        <end position="450"/>
    </location>
    <ligand>
        <name>ATP</name>
        <dbReference type="ChEBI" id="CHEBI:30616"/>
    </ligand>
</feature>
<feature type="binding site" evidence="1">
    <location>
        <position position="455"/>
    </location>
    <ligand>
        <name>ATP</name>
        <dbReference type="ChEBI" id="CHEBI:30616"/>
    </ligand>
</feature>
<feature type="modified residue" description="N6-acetyllysine" evidence="1">
    <location>
        <position position="87"/>
    </location>
</feature>
<feature type="modified residue" description="N6-acetyllysine" evidence="1">
    <location>
        <position position="523"/>
    </location>
</feature>
<accession>B2U3L1</accession>
<reference key="1">
    <citation type="submission" date="2008-05" db="EMBL/GenBank/DDBJ databases">
        <title>Complete sequence of Shigella boydii serotype 18 strain BS512.</title>
        <authorList>
            <person name="Rasko D.A."/>
            <person name="Rosovitz M."/>
            <person name="Maurelli A.T."/>
            <person name="Myers G."/>
            <person name="Seshadri R."/>
            <person name="Cer R."/>
            <person name="Jiang L."/>
            <person name="Ravel J."/>
            <person name="Sebastian Y."/>
        </authorList>
    </citation>
    <scope>NUCLEOTIDE SEQUENCE [LARGE SCALE GENOMIC DNA]</scope>
    <source>
        <strain>CDC 3083-94 / BS512</strain>
    </source>
</reference>
<protein>
    <recommendedName>
        <fullName evidence="1">Phosphoenolpyruvate carboxykinase (ATP)</fullName>
        <shortName evidence="1">PCK</shortName>
        <shortName evidence="1">PEP carboxykinase</shortName>
        <shortName evidence="1">PEPCK</shortName>
        <ecNumber evidence="1">4.1.1.49</ecNumber>
    </recommendedName>
</protein>
<dbReference type="EC" id="4.1.1.49" evidence="1"/>
<dbReference type="EMBL" id="CP001063">
    <property type="protein sequence ID" value="ACD09881.1"/>
    <property type="molecule type" value="Genomic_DNA"/>
</dbReference>
<dbReference type="RefSeq" id="WP_001265681.1">
    <property type="nucleotide sequence ID" value="NC_010658.1"/>
</dbReference>
<dbReference type="SMR" id="B2U3L1"/>
<dbReference type="STRING" id="344609.SbBS512_E3782"/>
<dbReference type="KEGG" id="sbc:SbBS512_E3782"/>
<dbReference type="HOGENOM" id="CLU_018247_0_1_6"/>
<dbReference type="UniPathway" id="UPA00138"/>
<dbReference type="Proteomes" id="UP000001030">
    <property type="component" value="Chromosome"/>
</dbReference>
<dbReference type="GO" id="GO:0005829">
    <property type="term" value="C:cytosol"/>
    <property type="evidence" value="ECO:0007669"/>
    <property type="project" value="TreeGrafter"/>
</dbReference>
<dbReference type="GO" id="GO:0005524">
    <property type="term" value="F:ATP binding"/>
    <property type="evidence" value="ECO:0007669"/>
    <property type="project" value="UniProtKB-UniRule"/>
</dbReference>
<dbReference type="GO" id="GO:0046872">
    <property type="term" value="F:metal ion binding"/>
    <property type="evidence" value="ECO:0007669"/>
    <property type="project" value="UniProtKB-KW"/>
</dbReference>
<dbReference type="GO" id="GO:0004612">
    <property type="term" value="F:phosphoenolpyruvate carboxykinase (ATP) activity"/>
    <property type="evidence" value="ECO:0007669"/>
    <property type="project" value="UniProtKB-UniRule"/>
</dbReference>
<dbReference type="GO" id="GO:0006094">
    <property type="term" value="P:gluconeogenesis"/>
    <property type="evidence" value="ECO:0007669"/>
    <property type="project" value="UniProtKB-UniRule"/>
</dbReference>
<dbReference type="CDD" id="cd00484">
    <property type="entry name" value="PEPCK_ATP"/>
    <property type="match status" value="1"/>
</dbReference>
<dbReference type="FunFam" id="2.170.8.10:FF:000001">
    <property type="entry name" value="Phosphoenolpyruvate carboxykinase (ATP)"/>
    <property type="match status" value="1"/>
</dbReference>
<dbReference type="FunFam" id="3.40.449.10:FF:000001">
    <property type="entry name" value="Phosphoenolpyruvate carboxykinase (ATP)"/>
    <property type="match status" value="1"/>
</dbReference>
<dbReference type="Gene3D" id="3.90.228.20">
    <property type="match status" value="1"/>
</dbReference>
<dbReference type="Gene3D" id="3.40.449.10">
    <property type="entry name" value="Phosphoenolpyruvate Carboxykinase, domain 1"/>
    <property type="match status" value="1"/>
</dbReference>
<dbReference type="Gene3D" id="2.170.8.10">
    <property type="entry name" value="Phosphoenolpyruvate Carboxykinase, domain 2"/>
    <property type="match status" value="1"/>
</dbReference>
<dbReference type="HAMAP" id="MF_00453">
    <property type="entry name" value="PEPCK_ATP"/>
    <property type="match status" value="1"/>
</dbReference>
<dbReference type="InterPro" id="IPR001272">
    <property type="entry name" value="PEP_carboxykinase_ATP"/>
</dbReference>
<dbReference type="InterPro" id="IPR013035">
    <property type="entry name" value="PEP_carboxykinase_C"/>
</dbReference>
<dbReference type="InterPro" id="IPR008210">
    <property type="entry name" value="PEP_carboxykinase_N"/>
</dbReference>
<dbReference type="InterPro" id="IPR015994">
    <property type="entry name" value="PEPCK_ATP_CS"/>
</dbReference>
<dbReference type="NCBIfam" id="TIGR00224">
    <property type="entry name" value="pckA"/>
    <property type="match status" value="1"/>
</dbReference>
<dbReference type="NCBIfam" id="NF006819">
    <property type="entry name" value="PRK09344.1-1"/>
    <property type="match status" value="1"/>
</dbReference>
<dbReference type="NCBIfam" id="NF006820">
    <property type="entry name" value="PRK09344.1-2"/>
    <property type="match status" value="1"/>
</dbReference>
<dbReference type="NCBIfam" id="NF006821">
    <property type="entry name" value="PRK09344.1-3"/>
    <property type="match status" value="1"/>
</dbReference>
<dbReference type="PANTHER" id="PTHR30031:SF0">
    <property type="entry name" value="PHOSPHOENOLPYRUVATE CARBOXYKINASE (ATP)"/>
    <property type="match status" value="1"/>
</dbReference>
<dbReference type="PANTHER" id="PTHR30031">
    <property type="entry name" value="PHOSPHOENOLPYRUVATE CARBOXYKINASE ATP"/>
    <property type="match status" value="1"/>
</dbReference>
<dbReference type="Pfam" id="PF01293">
    <property type="entry name" value="PEPCK_ATP"/>
    <property type="match status" value="1"/>
</dbReference>
<dbReference type="PIRSF" id="PIRSF006294">
    <property type="entry name" value="PEP_crbxkin"/>
    <property type="match status" value="1"/>
</dbReference>
<dbReference type="SUPFAM" id="SSF68923">
    <property type="entry name" value="PEP carboxykinase N-terminal domain"/>
    <property type="match status" value="1"/>
</dbReference>
<dbReference type="SUPFAM" id="SSF53795">
    <property type="entry name" value="PEP carboxykinase-like"/>
    <property type="match status" value="1"/>
</dbReference>
<dbReference type="PROSITE" id="PS00532">
    <property type="entry name" value="PEPCK_ATP"/>
    <property type="match status" value="1"/>
</dbReference>
<gene>
    <name evidence="1" type="primary">pckA</name>
    <name type="ordered locus">SbBS512_E3782</name>
</gene>
<comment type="function">
    <text evidence="1">Involved in the gluconeogenesis. Catalyzes the conversion of oxaloacetate (OAA) to phosphoenolpyruvate (PEP) through direct phosphoryl transfer between the nucleoside triphosphate and OAA.</text>
</comment>
<comment type="catalytic activity">
    <reaction evidence="1">
        <text>oxaloacetate + ATP = phosphoenolpyruvate + ADP + CO2</text>
        <dbReference type="Rhea" id="RHEA:18617"/>
        <dbReference type="ChEBI" id="CHEBI:16452"/>
        <dbReference type="ChEBI" id="CHEBI:16526"/>
        <dbReference type="ChEBI" id="CHEBI:30616"/>
        <dbReference type="ChEBI" id="CHEBI:58702"/>
        <dbReference type="ChEBI" id="CHEBI:456216"/>
        <dbReference type="EC" id="4.1.1.49"/>
    </reaction>
</comment>
<comment type="cofactor">
    <cofactor evidence="1">
        <name>Mn(2+)</name>
        <dbReference type="ChEBI" id="CHEBI:29035"/>
    </cofactor>
    <text evidence="1">Binds 1 Mn(2+) ion per subunit.</text>
</comment>
<comment type="pathway">
    <text evidence="1">Carbohydrate biosynthesis; gluconeogenesis.</text>
</comment>
<comment type="subunit">
    <text evidence="1">Monomer.</text>
</comment>
<comment type="subcellular location">
    <subcellularLocation>
        <location evidence="1">Cytoplasm</location>
    </subcellularLocation>
</comment>
<comment type="similarity">
    <text evidence="1">Belongs to the phosphoenolpyruvate carboxykinase (ATP) family.</text>
</comment>
<evidence type="ECO:0000255" key="1">
    <source>
        <dbReference type="HAMAP-Rule" id="MF_00453"/>
    </source>
</evidence>
<sequence length="540" mass="59643">MRVNNGLTPQELEAYGISDVHDIVYNPSYDLLYQEELDPSLTGYERGVLTNLGAVAVDTGIFTGRSPKDKYIVRDDTTRDTFWWADKGKGKNDNKPLSPETWQHLKGLVTRQLSGKRLFVVDAFCGANPDTRLSVRFITEVAWQAHFVKNMFIRPSDEELAGFKPDFIVMNGAKCTNPQWKEQGLNSENFVAFNLTERMQLIGGTWYGGEMKKGMFSMMNYLLPLKGIASMHCSANVGEKGDVAVFFGLSGTGKTTLSTDPKRRLIGDDEHGWDDDGVFNFEGGCYAKTIKLSKEAEPEIYNAIRRDALLENVTVREDGTIDFDDGSKTENTRVSYPIYHIDNIVKPVSKAGHATKVIFLTADAFGVLPPVSRLTADQTQYHFLSGFTAKLAGTERGITEPTPTFSACFGAAFLSLHPTQYAEVLVKRMQAAGAQAYLVNTGWNGTGKRISIKDTRAIIDAILNGSLDNAETFTLPMFNLAIPTELPGVDTKILDPRNTYASPEQWQEKAETLAKLFIDNFDKYTDTPAGAALVAAGPKL</sequence>
<proteinExistence type="inferred from homology"/>